<name>CPR_PIPNI</name>
<dbReference type="EC" id="1.6.2.4" evidence="1"/>
<dbReference type="EMBL" id="MT643913">
    <property type="protein sequence ID" value="QQS74307.1"/>
    <property type="molecule type" value="mRNA"/>
</dbReference>
<dbReference type="SMR" id="A0A7T9QPQ1"/>
<dbReference type="GO" id="GO:0005829">
    <property type="term" value="C:cytosol"/>
    <property type="evidence" value="ECO:0007669"/>
    <property type="project" value="TreeGrafter"/>
</dbReference>
<dbReference type="GO" id="GO:0005789">
    <property type="term" value="C:endoplasmic reticulum membrane"/>
    <property type="evidence" value="ECO:0007669"/>
    <property type="project" value="UniProtKB-SubCell"/>
</dbReference>
<dbReference type="GO" id="GO:0050660">
    <property type="term" value="F:flavin adenine dinucleotide binding"/>
    <property type="evidence" value="ECO:0007669"/>
    <property type="project" value="UniProtKB-UniRule"/>
</dbReference>
<dbReference type="GO" id="GO:0010181">
    <property type="term" value="F:FMN binding"/>
    <property type="evidence" value="ECO:0007669"/>
    <property type="project" value="UniProtKB-UniRule"/>
</dbReference>
<dbReference type="GO" id="GO:0050661">
    <property type="term" value="F:NADP binding"/>
    <property type="evidence" value="ECO:0007669"/>
    <property type="project" value="UniProtKB-UniRule"/>
</dbReference>
<dbReference type="GO" id="GO:0003958">
    <property type="term" value="F:NADPH-hemoprotein reductase activity"/>
    <property type="evidence" value="ECO:0007669"/>
    <property type="project" value="UniProtKB-UniRule"/>
</dbReference>
<dbReference type="GO" id="GO:0160181">
    <property type="term" value="P:piperine biosynthetic process"/>
    <property type="evidence" value="ECO:0000314"/>
    <property type="project" value="UniProtKB"/>
</dbReference>
<dbReference type="CDD" id="cd06204">
    <property type="entry name" value="CYPOR"/>
    <property type="match status" value="1"/>
</dbReference>
<dbReference type="FunFam" id="1.20.990.10:FF:000003">
    <property type="entry name" value="NADPH--cytochrome P450 reductase"/>
    <property type="match status" value="1"/>
</dbReference>
<dbReference type="FunFam" id="3.40.50.360:FF:000023">
    <property type="entry name" value="NADPH--cytochrome P450 reductase"/>
    <property type="match status" value="1"/>
</dbReference>
<dbReference type="FunFam" id="3.40.50.80:FF:000001">
    <property type="entry name" value="NADPH--cytochrome P450 reductase 1"/>
    <property type="match status" value="1"/>
</dbReference>
<dbReference type="Gene3D" id="3.40.50.360">
    <property type="match status" value="1"/>
</dbReference>
<dbReference type="Gene3D" id="1.20.990.10">
    <property type="entry name" value="NADPH-cytochrome p450 Reductase, Chain A, domain 3"/>
    <property type="match status" value="1"/>
</dbReference>
<dbReference type="Gene3D" id="3.40.50.80">
    <property type="entry name" value="Nucleotide-binding domain of ferredoxin-NADP reductase (FNR) module"/>
    <property type="match status" value="1"/>
</dbReference>
<dbReference type="Gene3D" id="2.40.30.10">
    <property type="entry name" value="Translation factors"/>
    <property type="match status" value="1"/>
</dbReference>
<dbReference type="HAMAP" id="MF_03212">
    <property type="entry name" value="NCPR"/>
    <property type="match status" value="1"/>
</dbReference>
<dbReference type="InterPro" id="IPR003097">
    <property type="entry name" value="CysJ-like_FAD-binding"/>
</dbReference>
<dbReference type="InterPro" id="IPR017927">
    <property type="entry name" value="FAD-bd_FR_type"/>
</dbReference>
<dbReference type="InterPro" id="IPR001094">
    <property type="entry name" value="Flavdoxin-like"/>
</dbReference>
<dbReference type="InterPro" id="IPR008254">
    <property type="entry name" value="Flavodoxin/NO_synth"/>
</dbReference>
<dbReference type="InterPro" id="IPR001709">
    <property type="entry name" value="Flavoprot_Pyr_Nucl_cyt_Rdtase"/>
</dbReference>
<dbReference type="InterPro" id="IPR029039">
    <property type="entry name" value="Flavoprotein-like_sf"/>
</dbReference>
<dbReference type="InterPro" id="IPR039261">
    <property type="entry name" value="FNR_nucleotide-bd"/>
</dbReference>
<dbReference type="InterPro" id="IPR023173">
    <property type="entry name" value="NADPH_Cyt_P450_Rdtase_alpha"/>
</dbReference>
<dbReference type="InterPro" id="IPR001433">
    <property type="entry name" value="OxRdtase_FAD/NAD-bd"/>
</dbReference>
<dbReference type="InterPro" id="IPR023208">
    <property type="entry name" value="P450R"/>
</dbReference>
<dbReference type="InterPro" id="IPR017938">
    <property type="entry name" value="Riboflavin_synthase-like_b-brl"/>
</dbReference>
<dbReference type="PANTHER" id="PTHR19384:SF17">
    <property type="entry name" value="NADPH--CYTOCHROME P450 REDUCTASE"/>
    <property type="match status" value="1"/>
</dbReference>
<dbReference type="PANTHER" id="PTHR19384">
    <property type="entry name" value="NITRIC OXIDE SYNTHASE-RELATED"/>
    <property type="match status" value="1"/>
</dbReference>
<dbReference type="Pfam" id="PF00667">
    <property type="entry name" value="FAD_binding_1"/>
    <property type="match status" value="1"/>
</dbReference>
<dbReference type="Pfam" id="PF00258">
    <property type="entry name" value="Flavodoxin_1"/>
    <property type="match status" value="1"/>
</dbReference>
<dbReference type="Pfam" id="PF00175">
    <property type="entry name" value="NAD_binding_1"/>
    <property type="match status" value="1"/>
</dbReference>
<dbReference type="PIRSF" id="PIRSF000208">
    <property type="entry name" value="P450R"/>
    <property type="match status" value="1"/>
</dbReference>
<dbReference type="PRINTS" id="PR00369">
    <property type="entry name" value="FLAVODOXIN"/>
</dbReference>
<dbReference type="PRINTS" id="PR00371">
    <property type="entry name" value="FPNCR"/>
</dbReference>
<dbReference type="SUPFAM" id="SSF52343">
    <property type="entry name" value="Ferredoxin reductase-like, C-terminal NADP-linked domain"/>
    <property type="match status" value="1"/>
</dbReference>
<dbReference type="SUPFAM" id="SSF52218">
    <property type="entry name" value="Flavoproteins"/>
    <property type="match status" value="1"/>
</dbReference>
<dbReference type="SUPFAM" id="SSF63380">
    <property type="entry name" value="Riboflavin synthase domain-like"/>
    <property type="match status" value="1"/>
</dbReference>
<dbReference type="PROSITE" id="PS51384">
    <property type="entry name" value="FAD_FR"/>
    <property type="match status" value="1"/>
</dbReference>
<dbReference type="PROSITE" id="PS50902">
    <property type="entry name" value="FLAVODOXIN_LIKE"/>
    <property type="match status" value="1"/>
</dbReference>
<feature type="chain" id="PRO_0000456903" description="NADPH--cytochrome P450 reductase">
    <location>
        <begin position="1"/>
        <end position="706"/>
    </location>
</feature>
<feature type="transmembrane region" description="Helical" evidence="1">
    <location>
        <begin position="43"/>
        <end position="63"/>
    </location>
</feature>
<feature type="domain" description="Flavodoxin-like" evidence="1">
    <location>
        <begin position="95"/>
        <end position="245"/>
    </location>
</feature>
<feature type="domain" description="FAD-binding FR-type" evidence="1">
    <location>
        <begin position="303"/>
        <end position="551"/>
    </location>
</feature>
<feature type="binding site" evidence="1">
    <location>
        <begin position="101"/>
        <end position="106"/>
    </location>
    <ligand>
        <name>FMN</name>
        <dbReference type="ChEBI" id="CHEBI:58210"/>
    </ligand>
</feature>
<feature type="binding site" evidence="1">
    <location>
        <begin position="156"/>
        <end position="159"/>
    </location>
    <ligand>
        <name>FMN</name>
        <dbReference type="ChEBI" id="CHEBI:58210"/>
    </ligand>
</feature>
<feature type="binding site" evidence="1">
    <location>
        <begin position="194"/>
        <end position="203"/>
    </location>
    <ligand>
        <name>FMN</name>
        <dbReference type="ChEBI" id="CHEBI:58210"/>
    </ligand>
</feature>
<feature type="binding site" evidence="1">
    <location>
        <position position="229"/>
    </location>
    <ligand>
        <name>FMN</name>
        <dbReference type="ChEBI" id="CHEBI:58210"/>
    </ligand>
</feature>
<feature type="binding site" evidence="1">
    <location>
        <position position="323"/>
    </location>
    <ligand>
        <name>NADP(+)</name>
        <dbReference type="ChEBI" id="CHEBI:58349"/>
    </ligand>
</feature>
<feature type="binding site" evidence="1">
    <location>
        <begin position="484"/>
        <end position="487"/>
    </location>
    <ligand>
        <name>FAD</name>
        <dbReference type="ChEBI" id="CHEBI:57692"/>
    </ligand>
</feature>
<feature type="binding site" evidence="1">
    <location>
        <begin position="502"/>
        <end position="504"/>
    </location>
    <ligand>
        <name>FAD</name>
        <dbReference type="ChEBI" id="CHEBI:57692"/>
    </ligand>
</feature>
<feature type="binding site" evidence="1">
    <location>
        <begin position="518"/>
        <end position="521"/>
    </location>
    <ligand>
        <name>FAD</name>
        <dbReference type="ChEBI" id="CHEBI:57692"/>
    </ligand>
</feature>
<feature type="binding site" evidence="1">
    <location>
        <position position="565"/>
    </location>
    <ligand>
        <name>NADP(+)</name>
        <dbReference type="ChEBI" id="CHEBI:58349"/>
    </ligand>
</feature>
<feature type="binding site" evidence="1">
    <location>
        <begin position="626"/>
        <end position="627"/>
    </location>
    <ligand>
        <name>NADP(+)</name>
        <dbReference type="ChEBI" id="CHEBI:58349"/>
    </ligand>
</feature>
<feature type="binding site" evidence="1">
    <location>
        <begin position="632"/>
        <end position="636"/>
    </location>
    <ligand>
        <name>NADP(+)</name>
        <dbReference type="ChEBI" id="CHEBI:58349"/>
    </ligand>
</feature>
<feature type="binding site" evidence="1">
    <location>
        <position position="668"/>
    </location>
    <ligand>
        <name>NADP(+)</name>
        <dbReference type="ChEBI" id="CHEBI:58349"/>
    </ligand>
</feature>
<feature type="binding site" evidence="1">
    <location>
        <position position="706"/>
    </location>
    <ligand>
        <name>FAD</name>
        <dbReference type="ChEBI" id="CHEBI:57692"/>
    </ligand>
</feature>
<proteinExistence type="evidence at transcript level"/>
<accession>A0A7T9QPQ1</accession>
<comment type="function">
    <text evidence="1 2">This enzyme is required for electron transfer from NADP to cytochrome P450 in microsomes (By similarity). It can also provide electron transfer to heme oxygenase and cytochrome B5 (By similarity). Cytochrome P450 reductase involved in the biosynthesis of aromatic piperamides natural products such as piperine (1-piperoyl-piperidine), the pungent principle contributing, together with several terpenoids, to the aromatic properties of black pepper fruits, and displaying numerous pharmacological activities such as antiproliferative, antitumor, antiangiogenesis, antioxidant, antidiabetic, antiobesity, cardioprotective, antimicrobial, antiaging, and immunomodulatory effects (PubMed:33435446). Provides electron to the piperic acid synthase CYP719A37 (PnCYP719) (PubMed:33435446).</text>
</comment>
<comment type="catalytic activity">
    <reaction evidence="1">
        <text>2 oxidized [cytochrome P450] + NADPH = 2 reduced [cytochrome P450] + NADP(+) + H(+)</text>
        <dbReference type="Rhea" id="RHEA:24040"/>
        <dbReference type="Rhea" id="RHEA-COMP:14627"/>
        <dbReference type="Rhea" id="RHEA-COMP:14628"/>
        <dbReference type="ChEBI" id="CHEBI:15378"/>
        <dbReference type="ChEBI" id="CHEBI:55376"/>
        <dbReference type="ChEBI" id="CHEBI:57783"/>
        <dbReference type="ChEBI" id="CHEBI:58349"/>
        <dbReference type="ChEBI" id="CHEBI:60344"/>
        <dbReference type="EC" id="1.6.2.4"/>
    </reaction>
</comment>
<comment type="cofactor">
    <cofactor evidence="1">
        <name>FAD</name>
        <dbReference type="ChEBI" id="CHEBI:57692"/>
    </cofactor>
    <text evidence="1">Binds 1 FAD per monomer.</text>
</comment>
<comment type="cofactor">
    <cofactor evidence="1">
        <name>FMN</name>
        <dbReference type="ChEBI" id="CHEBI:58210"/>
    </cofactor>
    <text evidence="1">Binds 1 FMN per monomer.</text>
</comment>
<comment type="pathway">
    <text evidence="2">Aromatic compound metabolism.</text>
</comment>
<comment type="subcellular location">
    <subcellularLocation>
        <location evidence="1">Endoplasmic reticulum membrane</location>
        <topology evidence="1">Single-pass membrane protein</topology>
        <orientation evidence="1">Cytoplasmic side</orientation>
    </subcellularLocation>
</comment>
<comment type="tissue specificity">
    <text evidence="2">Expressed in immature fruits, young leaves, flowering spadices and roots.</text>
</comment>
<comment type="similarity">
    <text evidence="1">Belongs to the NADPH--cytochrome P450 reductase family.</text>
</comment>
<comment type="similarity">
    <text evidence="1">In the N-terminal section; belongs to the flavodoxin family.</text>
</comment>
<comment type="similarity">
    <text evidence="1">In the C-terminal section; belongs to the flavoprotein pyridine nucleotide cytochrome reductase family.</text>
</comment>
<evidence type="ECO:0000255" key="1">
    <source>
        <dbReference type="HAMAP-Rule" id="MF_03212"/>
    </source>
</evidence>
<evidence type="ECO:0000269" key="2">
    <source>
    </source>
</evidence>
<evidence type="ECO:0000303" key="3">
    <source>
    </source>
</evidence>
<gene>
    <name evidence="3" type="primary">CPR</name>
</gene>
<reference key="1">
    <citation type="journal article" date="2021" name="Plants (Basel)">
        <title>Piper nigrum CYP719A37 catalyzes the decisive methylenedioxy bridge formation in piperine biosynthesis.</title>
        <authorList>
            <person name="Schnabel A."/>
            <person name="Cotinguiba F."/>
            <person name="Athmer B."/>
            <person name="Vogt T."/>
        </authorList>
    </citation>
    <scope>NUCLEOTIDE SEQUENCE [MRNA]</scope>
    <scope>FUNCTION</scope>
    <scope>TISSUE SPECIFICITY</scope>
    <scope>PATHWAY</scope>
    <source>
        <tissue>Fruit</tissue>
    </source>
</reference>
<reference key="2">
    <citation type="journal article" date="2021" name="Phytother. Res.">
        <title>Piperine: A review of its biological effects.</title>
        <authorList>
            <person name="Haq I.U."/>
            <person name="Imran M."/>
            <person name="Nadeem M."/>
            <person name="Tufail T."/>
            <person name="Gondal T.A."/>
            <person name="Mubarak M.S."/>
        </authorList>
    </citation>
    <scope>REVIEW ON PIPERINE PHARMACOLOGICAL AND CULINARY USES</scope>
</reference>
<keyword id="KW-0256">Endoplasmic reticulum</keyword>
<keyword id="KW-0274">FAD</keyword>
<keyword id="KW-0285">Flavoprotein</keyword>
<keyword id="KW-0288">FMN</keyword>
<keyword id="KW-0472">Membrane</keyword>
<keyword id="KW-0521">NADP</keyword>
<keyword id="KW-0560">Oxidoreductase</keyword>
<keyword id="KW-0812">Transmembrane</keyword>
<keyword id="KW-1133">Transmembrane helix</keyword>
<sequence length="706" mass="77663">MESGSSIDLSPLDLVAAILQGKADASSLLSLTRSTVSDGNGDLLVLLATSAALLVGLVAALVWRRSAAARTAEPPKPLLAKKEAEPEVDDGKRKVTVFFGTQTGTAEGFAKAFAEEAKARYEKAAFRILDLDDYAADDDEYEEKMKEETLAFFFLATYGDGEPTDNAARFYKWFAEGKDTGNFFEKMQYGVFGLGNRQYEHFNKIAKVVDELLAEQGAKRLVPLGLGDDDQCIEDDFTAWRELIWPELDQLLRNEDDVSGASATYTAAIPEYRVVFYDHEDSRIQEKKNANGYANGHASYDIQHPCLANVAVRRELHTPASDRSCTHLEFDVSGLGLHYETGDHVGVYAENCIETVEKAECLLGLSPATIFSLHTDQVDGTPLSGSFLPPPFPSPCSLRTALAKYADLLSSPKKAALVALASYASEPSEAKRLQFLASPSGKDEYSQWIVANQRSLLEVMAEFPSAKPPLGVFFGAIAPRLQPRYYSISSSPKVAPTRIHVTCALVYEPTPTGRIHKGVCSTWMKNAVPQEESSNCSSAPISVRQSNFKLPMDTSLPVIMIGPGTGLAPFRGFLQERLALKDAGFNLGPAVLFFGCRNRKMDFIYENELNEFVEAGVLSDLIVAFSREGPTKEYVQHKMAEKAVDIWNMISQGGYVYVCGDAKGMARDVHRALHTIVQEQGSMDSSKVESYVKNLQMEGRYLRDVW</sequence>
<protein>
    <recommendedName>
        <fullName evidence="1">NADPH--cytochrome P450 reductase</fullName>
        <shortName evidence="1">CPR</shortName>
        <shortName evidence="1">P450R</shortName>
        <shortName evidence="3">PnCPR</shortName>
        <ecNumber evidence="1">1.6.2.4</ecNumber>
    </recommendedName>
</protein>
<organism>
    <name type="scientific">Piper nigrum</name>
    <name type="common">Black pepper</name>
    <dbReference type="NCBI Taxonomy" id="13216"/>
    <lineage>
        <taxon>Eukaryota</taxon>
        <taxon>Viridiplantae</taxon>
        <taxon>Streptophyta</taxon>
        <taxon>Embryophyta</taxon>
        <taxon>Tracheophyta</taxon>
        <taxon>Spermatophyta</taxon>
        <taxon>Magnoliopsida</taxon>
        <taxon>Magnoliidae</taxon>
        <taxon>Piperales</taxon>
        <taxon>Piperaceae</taxon>
        <taxon>Piper</taxon>
    </lineage>
</organism>